<evidence type="ECO:0000250" key="1"/>
<evidence type="ECO:0000250" key="2">
    <source>
        <dbReference type="UniProtKB" id="Q8WWK9"/>
    </source>
</evidence>
<evidence type="ECO:0000256" key="3">
    <source>
        <dbReference type="SAM" id="MobiDB-lite"/>
    </source>
</evidence>
<evidence type="ECO:0000305" key="4"/>
<proteinExistence type="evidence at transcript level"/>
<protein>
    <recommendedName>
        <fullName>Cytoskeleton-associated protein 2</fullName>
    </recommendedName>
</protein>
<sequence>MSTPAVPQDLQLPPSQRAQSAFKEQRRQKLKEHLLRRKTLFAYKQENEVLSSRGQRVVTSEDQVQEGTKALKLKTKMADKENMKRPAESKNNTVVGKHCIPLKPSNELTNSTVVIDTHKPKDSNQTPHLLLTEDDPQSQHMTLSQAFHLKNNSKKKQMTTEKQKQDANMPKKPVLGSYRGQIVQSKINSFRKPLQVKDESSAATKKLSATIPKATKPQPVNTSNATVKSNRSSNMTATTKFVSTTSQNTQLVRPPIRSHHSNTQDTVKQGISRTSANVTIRKGPREKELLQSKTALSSVKTSSSQGIIRNKTLSRCIASEVVARPASLSNDKLTEKSEPVDQRRHTAGKASVDSRSAQPKETSEERKARLNEWKAGKGRVLKRPPNSVVTQHEPEGQNEKPVGSFWTTMAEEDEQRLFTEKVNNTFSECLNLINEGCPKGDILITLNDLIKNIPDAKKLVKYWICLALIEPITSPIENIIAIYEKAILAGAQPIEEMRHTIVDILTMKSQEKANLGENMEKSCASKEEVKEVSIEDTGVDVDPEKLEMESKHHRNLLFQDCEKEQDNKTKDPTHDVKTPNTETRTSCLIKYNVSTTPYLQSVKKKVQFDETNSAFKELKFLTPVRRSRRLQEKTSKLPDMLKDHYPCVSSLEQLTELGRETDAFVCRPNAALCRVYYEADTT</sequence>
<comment type="function">
    <text evidence="1">Possesses microtubule stabilizing properties. Involved in regulating aneuploidy, cell cycling, and cell death in a p53/TP53-dependent manner (By similarity).</text>
</comment>
<comment type="subunit">
    <text evidence="1">Associates with alpha- and beta-tubulins.</text>
</comment>
<comment type="subcellular location">
    <subcellularLocation>
        <location evidence="1">Cytoplasm</location>
        <location evidence="1">Cytoskeleton</location>
    </subcellularLocation>
</comment>
<comment type="similarity">
    <text evidence="4">Belongs to the CKAP2 family.</text>
</comment>
<dbReference type="EMBL" id="CR860160">
    <property type="protein sequence ID" value="CAH92302.1"/>
    <property type="molecule type" value="mRNA"/>
</dbReference>
<dbReference type="RefSeq" id="NP_001126347.1">
    <property type="nucleotide sequence ID" value="NM_001132875.2"/>
</dbReference>
<dbReference type="FunCoup" id="Q5R7F8">
    <property type="interactions" value="1016"/>
</dbReference>
<dbReference type="STRING" id="9601.ENSPPYP00000006141"/>
<dbReference type="GeneID" id="100173328"/>
<dbReference type="KEGG" id="pon:100173328"/>
<dbReference type="CTD" id="26586"/>
<dbReference type="eggNOG" id="ENOG502RUSI">
    <property type="taxonomic scope" value="Eukaryota"/>
</dbReference>
<dbReference type="InParanoid" id="Q5R7F8"/>
<dbReference type="OrthoDB" id="9945093at2759"/>
<dbReference type="Proteomes" id="UP000001595">
    <property type="component" value="Unplaced"/>
</dbReference>
<dbReference type="GO" id="GO:0005737">
    <property type="term" value="C:cytoplasm"/>
    <property type="evidence" value="ECO:0007669"/>
    <property type="project" value="UniProtKB-KW"/>
</dbReference>
<dbReference type="GO" id="GO:0005874">
    <property type="term" value="C:microtubule"/>
    <property type="evidence" value="ECO:0007669"/>
    <property type="project" value="UniProtKB-KW"/>
</dbReference>
<dbReference type="GO" id="GO:0006915">
    <property type="term" value="P:apoptotic process"/>
    <property type="evidence" value="ECO:0007669"/>
    <property type="project" value="UniProtKB-KW"/>
</dbReference>
<dbReference type="GO" id="GO:0007026">
    <property type="term" value="P:negative regulation of microtubule depolymerization"/>
    <property type="evidence" value="ECO:0007669"/>
    <property type="project" value="TreeGrafter"/>
</dbReference>
<dbReference type="InterPro" id="IPR029197">
    <property type="entry name" value="CKAP2_C"/>
</dbReference>
<dbReference type="InterPro" id="IPR026165">
    <property type="entry name" value="CKAP2_fam"/>
</dbReference>
<dbReference type="PANTHER" id="PTHR16076">
    <property type="entry name" value="CYTOSKELETON ASSOCIATED PROTEIN 2-RELATED"/>
    <property type="match status" value="1"/>
</dbReference>
<dbReference type="PANTHER" id="PTHR16076:SF8">
    <property type="entry name" value="CYTOSKELETON-ASSOCIATED PROTEIN 2"/>
    <property type="match status" value="1"/>
</dbReference>
<dbReference type="Pfam" id="PF15297">
    <property type="entry name" value="CKAP2_C"/>
    <property type="match status" value="1"/>
</dbReference>
<keyword id="KW-0053">Apoptosis</keyword>
<keyword id="KW-0131">Cell cycle</keyword>
<keyword id="KW-0963">Cytoplasm</keyword>
<keyword id="KW-0206">Cytoskeleton</keyword>
<keyword id="KW-0493">Microtubule</keyword>
<keyword id="KW-0597">Phosphoprotein</keyword>
<keyword id="KW-1185">Reference proteome</keyword>
<feature type="chain" id="PRO_0000324338" description="Cytoskeleton-associated protein 2">
    <location>
        <begin position="1"/>
        <end position="682"/>
    </location>
</feature>
<feature type="region of interest" description="Disordered" evidence="3">
    <location>
        <begin position="1"/>
        <end position="28"/>
    </location>
</feature>
<feature type="region of interest" description="Disordered" evidence="3">
    <location>
        <begin position="152"/>
        <end position="174"/>
    </location>
</feature>
<feature type="region of interest" description="Disordered" evidence="3">
    <location>
        <begin position="208"/>
        <end position="305"/>
    </location>
</feature>
<feature type="region of interest" description="Disordered" evidence="3">
    <location>
        <begin position="326"/>
        <end position="402"/>
    </location>
</feature>
<feature type="region of interest" description="Disordered" evidence="3">
    <location>
        <begin position="557"/>
        <end position="581"/>
    </location>
</feature>
<feature type="compositionally biased region" description="Polar residues" evidence="3">
    <location>
        <begin position="218"/>
        <end position="251"/>
    </location>
</feature>
<feature type="compositionally biased region" description="Polar residues" evidence="3">
    <location>
        <begin position="261"/>
        <end position="278"/>
    </location>
</feature>
<feature type="compositionally biased region" description="Polar residues" evidence="3">
    <location>
        <begin position="291"/>
        <end position="305"/>
    </location>
</feature>
<feature type="compositionally biased region" description="Basic and acidic residues" evidence="3">
    <location>
        <begin position="332"/>
        <end position="344"/>
    </location>
</feature>
<feature type="compositionally biased region" description="Basic and acidic residues" evidence="3">
    <location>
        <begin position="361"/>
        <end position="375"/>
    </location>
</feature>
<feature type="compositionally biased region" description="Basic and acidic residues" evidence="3">
    <location>
        <begin position="560"/>
        <end position="577"/>
    </location>
</feature>
<feature type="modified residue" description="Phosphoserine" evidence="2">
    <location>
        <position position="177"/>
    </location>
</feature>
<feature type="modified residue" description="Phosphoserine" evidence="2">
    <location>
        <position position="189"/>
    </location>
</feature>
<feature type="modified residue" description="Phosphoserine" evidence="2">
    <location>
        <position position="533"/>
    </location>
</feature>
<feature type="modified residue" description="Phosphothreonine" evidence="2">
    <location>
        <position position="578"/>
    </location>
</feature>
<feature type="modified residue" description="Phosphothreonine" evidence="2">
    <location>
        <position position="581"/>
    </location>
</feature>
<feature type="modified residue" description="Phosphoserine" evidence="2">
    <location>
        <position position="594"/>
    </location>
</feature>
<feature type="modified residue" description="Phosphothreonine" evidence="2">
    <location>
        <position position="595"/>
    </location>
</feature>
<feature type="modified residue" description="Phosphothreonine" evidence="2">
    <location>
        <position position="596"/>
    </location>
</feature>
<feature type="modified residue" description="Phosphotyrosine" evidence="2">
    <location>
        <position position="598"/>
    </location>
</feature>
<feature type="modified residue" description="Phosphoserine" evidence="2">
    <location>
        <position position="601"/>
    </location>
</feature>
<name>CKAP2_PONAB</name>
<reference key="1">
    <citation type="submission" date="2004-11" db="EMBL/GenBank/DDBJ databases">
        <authorList>
            <consortium name="The German cDNA consortium"/>
        </authorList>
    </citation>
    <scope>NUCLEOTIDE SEQUENCE [LARGE SCALE MRNA]</scope>
    <source>
        <tissue>Brain cortex</tissue>
    </source>
</reference>
<accession>Q5R7F8</accession>
<gene>
    <name type="primary">CKAP2</name>
</gene>
<organism>
    <name type="scientific">Pongo abelii</name>
    <name type="common">Sumatran orangutan</name>
    <name type="synonym">Pongo pygmaeus abelii</name>
    <dbReference type="NCBI Taxonomy" id="9601"/>
    <lineage>
        <taxon>Eukaryota</taxon>
        <taxon>Metazoa</taxon>
        <taxon>Chordata</taxon>
        <taxon>Craniata</taxon>
        <taxon>Vertebrata</taxon>
        <taxon>Euteleostomi</taxon>
        <taxon>Mammalia</taxon>
        <taxon>Eutheria</taxon>
        <taxon>Euarchontoglires</taxon>
        <taxon>Primates</taxon>
        <taxon>Haplorrhini</taxon>
        <taxon>Catarrhini</taxon>
        <taxon>Hominidae</taxon>
        <taxon>Pongo</taxon>
    </lineage>
</organism>